<sequence>MAKTDRSQPSVLARIAAFRTGLSAEASAADYLERQGYRILARRFKTRCGEIDLVAQRDALVAFVEVKARGNVDDAAYAVTPRQQSRIVAAAEAWLSRHPEHAMSELRFDAILIAPNTAPRHLPGAFDATP</sequence>
<dbReference type="EMBL" id="BX572594">
    <property type="protein sequence ID" value="CAE25767.1"/>
    <property type="molecule type" value="Genomic_DNA"/>
</dbReference>
<dbReference type="RefSeq" id="WP_011155891.1">
    <property type="nucleotide sequence ID" value="NZ_CP116810.1"/>
</dbReference>
<dbReference type="PDB" id="3FOV">
    <property type="method" value="X-ray"/>
    <property type="resolution" value="1.88 A"/>
    <property type="chains" value="A=1-130"/>
</dbReference>
<dbReference type="PDBsum" id="3FOV"/>
<dbReference type="SMR" id="Q6NCZ4"/>
<dbReference type="STRING" id="258594.RPA0323"/>
<dbReference type="eggNOG" id="COG0792">
    <property type="taxonomic scope" value="Bacteria"/>
</dbReference>
<dbReference type="HOGENOM" id="CLU_115353_0_2_5"/>
<dbReference type="PhylomeDB" id="Q6NCZ4"/>
<dbReference type="EvolutionaryTrace" id="Q6NCZ4"/>
<dbReference type="GO" id="GO:0003676">
    <property type="term" value="F:nucleic acid binding"/>
    <property type="evidence" value="ECO:0007669"/>
    <property type="project" value="InterPro"/>
</dbReference>
<dbReference type="Gene3D" id="3.40.1350.10">
    <property type="match status" value="1"/>
</dbReference>
<dbReference type="HAMAP" id="MF_00048">
    <property type="entry name" value="UPF0102"/>
    <property type="match status" value="1"/>
</dbReference>
<dbReference type="InterPro" id="IPR011335">
    <property type="entry name" value="Restrct_endonuc-II-like"/>
</dbReference>
<dbReference type="InterPro" id="IPR011856">
    <property type="entry name" value="tRNA_endonuc-like_dom_sf"/>
</dbReference>
<dbReference type="InterPro" id="IPR003509">
    <property type="entry name" value="UPF0102_YraN-like"/>
</dbReference>
<dbReference type="NCBIfam" id="NF009150">
    <property type="entry name" value="PRK12497.1-3"/>
    <property type="match status" value="1"/>
</dbReference>
<dbReference type="NCBIfam" id="NF009151">
    <property type="entry name" value="PRK12497.1-5"/>
    <property type="match status" value="1"/>
</dbReference>
<dbReference type="NCBIfam" id="TIGR00252">
    <property type="entry name" value="YraN family protein"/>
    <property type="match status" value="1"/>
</dbReference>
<dbReference type="PANTHER" id="PTHR34039">
    <property type="entry name" value="UPF0102 PROTEIN YRAN"/>
    <property type="match status" value="1"/>
</dbReference>
<dbReference type="PANTHER" id="PTHR34039:SF1">
    <property type="entry name" value="UPF0102 PROTEIN YRAN"/>
    <property type="match status" value="1"/>
</dbReference>
<dbReference type="Pfam" id="PF02021">
    <property type="entry name" value="UPF0102"/>
    <property type="match status" value="1"/>
</dbReference>
<dbReference type="SUPFAM" id="SSF52980">
    <property type="entry name" value="Restriction endonuclease-like"/>
    <property type="match status" value="1"/>
</dbReference>
<gene>
    <name type="ordered locus">RPA0323</name>
</gene>
<organism>
    <name type="scientific">Rhodopseudomonas palustris (strain ATCC BAA-98 / CGA009)</name>
    <dbReference type="NCBI Taxonomy" id="258594"/>
    <lineage>
        <taxon>Bacteria</taxon>
        <taxon>Pseudomonadati</taxon>
        <taxon>Pseudomonadota</taxon>
        <taxon>Alphaproteobacteria</taxon>
        <taxon>Hyphomicrobiales</taxon>
        <taxon>Nitrobacteraceae</taxon>
        <taxon>Rhodopseudomonas</taxon>
    </lineage>
</organism>
<proteinExistence type="evidence at protein level"/>
<reference key="1">
    <citation type="journal article" date="2004" name="Nat. Biotechnol.">
        <title>Complete genome sequence of the metabolically versatile photosynthetic bacterium Rhodopseudomonas palustris.</title>
        <authorList>
            <person name="Larimer F.W."/>
            <person name="Chain P."/>
            <person name="Hauser L."/>
            <person name="Lamerdin J.E."/>
            <person name="Malfatti S."/>
            <person name="Do L."/>
            <person name="Land M.L."/>
            <person name="Pelletier D.A."/>
            <person name="Beatty J.T."/>
            <person name="Lang A.S."/>
            <person name="Tabita F.R."/>
            <person name="Gibson J.L."/>
            <person name="Hanson T.E."/>
            <person name="Bobst C."/>
            <person name="Torres y Torres J.L."/>
            <person name="Peres C."/>
            <person name="Harrison F.H."/>
            <person name="Gibson J."/>
            <person name="Harwood C.S."/>
        </authorList>
    </citation>
    <scope>NUCLEOTIDE SEQUENCE [LARGE SCALE GENOMIC DNA]</scope>
    <source>
        <strain>ATCC BAA-98 / CGA009</strain>
    </source>
</reference>
<evidence type="ECO:0000255" key="1">
    <source>
        <dbReference type="HAMAP-Rule" id="MF_00048"/>
    </source>
</evidence>
<evidence type="ECO:0007829" key="2">
    <source>
        <dbReference type="PDB" id="3FOV"/>
    </source>
</evidence>
<comment type="similarity">
    <text evidence="1">Belongs to the UPF0102 family.</text>
</comment>
<name>Y323_RHOPA</name>
<keyword id="KW-0002">3D-structure</keyword>
<feature type="chain" id="PRO_0000336248" description="UPF0102 protein RPA0323">
    <location>
        <begin position="1"/>
        <end position="130"/>
    </location>
</feature>
<feature type="helix" evidence="2">
    <location>
        <begin position="24"/>
        <end position="34"/>
    </location>
</feature>
<feature type="strand" evidence="2">
    <location>
        <begin position="38"/>
        <end position="46"/>
    </location>
</feature>
<feature type="strand" evidence="2">
    <location>
        <begin position="49"/>
        <end position="57"/>
    </location>
</feature>
<feature type="strand" evidence="2">
    <location>
        <begin position="60"/>
        <end position="68"/>
    </location>
</feature>
<feature type="helix" evidence="2">
    <location>
        <begin position="81"/>
        <end position="97"/>
    </location>
</feature>
<feature type="helix" evidence="2">
    <location>
        <begin position="99"/>
        <end position="101"/>
    </location>
</feature>
<feature type="strand" evidence="2">
    <location>
        <begin position="104"/>
        <end position="113"/>
    </location>
</feature>
<feature type="strand" evidence="2">
    <location>
        <begin position="120"/>
        <end position="126"/>
    </location>
</feature>
<accession>Q6NCZ4</accession>
<protein>
    <recommendedName>
        <fullName evidence="1">UPF0102 protein RPA0323</fullName>
    </recommendedName>
</protein>